<feature type="chain" id="PRO_0000101742" description="Potassium channel subfamily K member 2">
    <location>
        <begin position="1"/>
        <end position="426"/>
    </location>
</feature>
<feature type="topological domain" description="Cytoplasmic" evidence="5">
    <location>
        <begin position="1"/>
        <end position="61"/>
    </location>
</feature>
<feature type="transmembrane region" description="Helical" evidence="5">
    <location>
        <begin position="62"/>
        <end position="82"/>
    </location>
</feature>
<feature type="intramembrane region" description="Pore-forming; Name=Pore-forming 1" evidence="5">
    <location>
        <begin position="144"/>
        <end position="170"/>
    </location>
</feature>
<feature type="transmembrane region" description="Helical" evidence="5">
    <location>
        <begin position="172"/>
        <end position="192"/>
    </location>
</feature>
<feature type="topological domain" description="Cytoplasmic" evidence="5">
    <location>
        <begin position="193"/>
        <end position="223"/>
    </location>
</feature>
<feature type="transmembrane region" description="Helical" evidence="5">
    <location>
        <begin position="224"/>
        <end position="244"/>
    </location>
</feature>
<feature type="intramembrane region" description="Pore-forming; Name=Pore-forming 2" evidence="5">
    <location>
        <begin position="253"/>
        <end position="283"/>
    </location>
</feature>
<feature type="transmembrane region" description="Helical" evidence="5">
    <location>
        <begin position="288"/>
        <end position="308"/>
    </location>
</feature>
<feature type="topological domain" description="Cytoplasmic" evidence="5">
    <location>
        <begin position="309"/>
        <end position="426"/>
    </location>
</feature>
<feature type="region of interest" description="Important for GNG4 binding and L-glutamate release in astrocytes" evidence="4">
    <location>
        <begin position="17"/>
        <end position="38"/>
    </location>
</feature>
<feature type="region of interest" description="Important for GNG4 binding and L-glutamate release in astrocytes" evidence="4">
    <location>
        <begin position="51"/>
        <end position="61"/>
    </location>
</feature>
<feature type="region of interest" description="Selectivity filter 1" evidence="4">
    <location>
        <begin position="157"/>
        <end position="162"/>
    </location>
</feature>
<feature type="region of interest" description="Selectivity filter 2" evidence="4">
    <location>
        <begin position="266"/>
        <end position="271"/>
    </location>
</feature>
<feature type="region of interest" description="Interaction with AKAP5" evidence="3">
    <location>
        <begin position="313"/>
        <end position="326"/>
    </location>
</feature>
<feature type="region of interest" description="Essential for chloroform and halothane sensitivity" evidence="3">
    <location>
        <begin position="337"/>
        <end position="385"/>
    </location>
</feature>
<feature type="binding site" evidence="14 24">
    <location>
        <position position="157"/>
    </location>
    <ligand>
        <name>K(+)</name>
        <dbReference type="ChEBI" id="CHEBI:29103"/>
        <label>1</label>
    </ligand>
</feature>
<feature type="binding site" evidence="14 24">
    <location>
        <position position="157"/>
    </location>
    <ligand>
        <name>K(+)</name>
        <dbReference type="ChEBI" id="CHEBI:29103"/>
        <label>4</label>
    </ligand>
</feature>
<feature type="binding site" evidence="14 24">
    <location>
        <position position="158"/>
    </location>
    <ligand>
        <name>K(+)</name>
        <dbReference type="ChEBI" id="CHEBI:29103"/>
        <label>1</label>
    </ligand>
</feature>
<feature type="binding site" evidence="3">
    <location>
        <position position="158"/>
    </location>
    <ligand>
        <name>K(+)</name>
        <dbReference type="ChEBI" id="CHEBI:29103"/>
        <label>2</label>
    </ligand>
</feature>
<feature type="binding site" evidence="3">
    <location>
        <position position="159"/>
    </location>
    <ligand>
        <name>K(+)</name>
        <dbReference type="ChEBI" id="CHEBI:29103"/>
        <label>2</label>
    </ligand>
</feature>
<feature type="binding site" evidence="3">
    <location>
        <position position="159"/>
    </location>
    <ligand>
        <name>K(+)</name>
        <dbReference type="ChEBI" id="CHEBI:29103"/>
        <label>3</label>
    </ligand>
</feature>
<feature type="binding site" evidence="3">
    <location>
        <position position="160"/>
    </location>
    <ligand>
        <name>K(+)</name>
        <dbReference type="ChEBI" id="CHEBI:29103"/>
        <label>3</label>
    </ligand>
</feature>
<feature type="binding site" evidence="14 24">
    <location>
        <position position="266"/>
    </location>
    <ligand>
        <name>K(+)</name>
        <dbReference type="ChEBI" id="CHEBI:29103"/>
        <label>1</label>
    </ligand>
</feature>
<feature type="binding site" evidence="14 24">
    <location>
        <position position="266"/>
    </location>
    <ligand>
        <name>K(+)</name>
        <dbReference type="ChEBI" id="CHEBI:29103"/>
        <label>4</label>
    </ligand>
</feature>
<feature type="binding site" evidence="14 24">
    <location>
        <position position="267"/>
    </location>
    <ligand>
        <name>K(+)</name>
        <dbReference type="ChEBI" id="CHEBI:29103"/>
        <label>1</label>
    </ligand>
</feature>
<feature type="binding site" evidence="3">
    <location>
        <position position="267"/>
    </location>
    <ligand>
        <name>K(+)</name>
        <dbReference type="ChEBI" id="CHEBI:29103"/>
        <label>2</label>
    </ligand>
</feature>
<feature type="binding site" evidence="3">
    <location>
        <position position="268"/>
    </location>
    <ligand>
        <name>K(+)</name>
        <dbReference type="ChEBI" id="CHEBI:29103"/>
        <label>2</label>
    </ligand>
</feature>
<feature type="binding site" evidence="3">
    <location>
        <position position="268"/>
    </location>
    <ligand>
        <name>K(+)</name>
        <dbReference type="ChEBI" id="CHEBI:29103"/>
        <label>3</label>
    </ligand>
</feature>
<feature type="binding site" evidence="3">
    <location>
        <position position="269"/>
    </location>
    <ligand>
        <name>K(+)</name>
        <dbReference type="ChEBI" id="CHEBI:29103"/>
        <label>3</label>
    </ligand>
</feature>
<feature type="site" description="pH sensor" evidence="3">
    <location>
        <position position="141"/>
    </location>
</feature>
<feature type="modified residue" description="Phosphoserine; by PKA" evidence="8">
    <location>
        <position position="348"/>
    </location>
</feature>
<feature type="glycosylation site" description="N-linked (GlcNAc...) asparagine" evidence="5 24">
    <location>
        <position position="110"/>
    </location>
</feature>
<feature type="glycosylation site" description="N-linked (GlcNAc...) asparagine" evidence="5">
    <location>
        <position position="134"/>
    </location>
</feature>
<feature type="disulfide bond" description="Interchain (with C-118)" evidence="14 24">
    <location>
        <position position="108"/>
    </location>
</feature>
<feature type="splice variant" id="VSP_024428" description="In isoform 3 and isoform 4." evidence="20">
    <original>MLPSASRERPGYRAGV</original>
    <variation>MMNPRAKRDFYL</variation>
    <location>
        <begin position="1"/>
        <end position="16"/>
    </location>
</feature>
<feature type="splice variant" id="VSP_024429" description="In isoform 2." evidence="15 16 18 19">
    <location>
        <begin position="2"/>
        <end position="16"/>
    </location>
</feature>
<feature type="splice variant" id="VSP_047567" description="In isoform 4." evidence="20">
    <original>KWNVSQTKIRIISTIIFILF</original>
    <variation>VDPILNIWTSISLSCGSGSL</variation>
    <location>
        <begin position="213"/>
        <end position="232"/>
    </location>
</feature>
<feature type="splice variant" id="VSP_047568" description="In isoform 4." evidence="20">
    <location>
        <begin position="233"/>
        <end position="426"/>
    </location>
</feature>
<feature type="mutagenesis site" description="Mimics non-phosphorylated state and has no effect on leak channel activity." evidence="8">
    <original>S</original>
    <variation>A</variation>
    <location>
        <position position="348"/>
    </location>
</feature>
<feature type="mutagenesis site" description="Phosphomimetic mutant which causes switch to voltage-dependent outward rectifier channel activity." evidence="8">
    <original>S</original>
    <variation>D</variation>
    <location>
        <position position="348"/>
    </location>
</feature>
<feature type="sequence conflict" description="In Ref. 3; AAD01203." evidence="22" ref="3">
    <original>DWL</original>
    <variation>RLV</variation>
    <location>
        <begin position="309"/>
        <end position="311"/>
    </location>
</feature>
<feature type="sequence conflict" description="In Ref. 1; AAD47569." evidence="22" ref="1">
    <original>S</original>
    <variation>N</variation>
    <location>
        <position position="391"/>
    </location>
</feature>
<feature type="sequence conflict" description="In Ref. 3; AAD01203." evidence="22" ref="3">
    <original>T</original>
    <variation>A</variation>
    <location>
        <position position="411"/>
    </location>
</feature>
<feature type="helix" evidence="25">
    <location>
        <begin position="54"/>
        <end position="105"/>
    </location>
</feature>
<feature type="helix" evidence="25">
    <location>
        <begin position="111"/>
        <end position="127"/>
    </location>
</feature>
<feature type="turn" evidence="25">
    <location>
        <begin position="133"/>
        <end position="137"/>
    </location>
</feature>
<feature type="strand" evidence="25">
    <location>
        <begin position="141"/>
        <end position="143"/>
    </location>
</feature>
<feature type="helix" evidence="25">
    <location>
        <begin position="144"/>
        <end position="155"/>
    </location>
</feature>
<feature type="helix" evidence="25">
    <location>
        <begin position="168"/>
        <end position="213"/>
    </location>
</feature>
<feature type="helix" evidence="25">
    <location>
        <begin position="218"/>
        <end position="237"/>
    </location>
</feature>
<feature type="helix" evidence="25">
    <location>
        <begin position="242"/>
        <end position="247"/>
    </location>
</feature>
<feature type="helix" evidence="25">
    <location>
        <begin position="253"/>
        <end position="264"/>
    </location>
</feature>
<feature type="helix" evidence="25">
    <location>
        <begin position="287"/>
        <end position="315"/>
    </location>
</feature>
<gene>
    <name evidence="17 23" type="primary">KCNK2</name>
    <name type="synonym">TREK</name>
    <name evidence="21" type="synonym">TREK1</name>
</gene>
<accession>O95069</accession>
<accession>A1Z1V3</accession>
<accession>A8K618</accession>
<accession>B2RCS4</accession>
<accession>B7ZL56</accession>
<accession>D3DTA5</accession>
<accession>Q5DP47</accession>
<accession>Q5DP48</accession>
<accession>Q9NRT2</accession>
<accession>Q9UNE3</accession>
<organism>
    <name type="scientific">Homo sapiens</name>
    <name type="common">Human</name>
    <dbReference type="NCBI Taxonomy" id="9606"/>
    <lineage>
        <taxon>Eukaryota</taxon>
        <taxon>Metazoa</taxon>
        <taxon>Chordata</taxon>
        <taxon>Craniata</taxon>
        <taxon>Vertebrata</taxon>
        <taxon>Euteleostomi</taxon>
        <taxon>Mammalia</taxon>
        <taxon>Eutheria</taxon>
        <taxon>Euarchontoglires</taxon>
        <taxon>Primates</taxon>
        <taxon>Haplorrhini</taxon>
        <taxon>Catarrhini</taxon>
        <taxon>Hominidae</taxon>
        <taxon>Homo</taxon>
    </lineage>
</organism>
<reference key="1">
    <citation type="journal article" date="1999" name="Nat. Neurosci.">
        <title>Inhalational anesthetics activate two-pore-domain background K+ channels.</title>
        <authorList>
            <person name="Patel A.J."/>
            <person name="Honore E."/>
            <person name="Lesage F."/>
            <person name="Fink M."/>
            <person name="Romey G."/>
            <person name="Lazdunski M."/>
        </authorList>
    </citation>
    <scope>NUCLEOTIDE SEQUENCE [MRNA] (ISOFORM 2)</scope>
    <scope>FUNCTION</scope>
    <scope>TRANSPORTER ACTIVITY</scope>
    <scope>ACTIVITY REGULATION</scope>
</reference>
<reference key="2">
    <citation type="journal article" date="2000" name="Pflugers Arch.">
        <title>Cloning, localisation and functional expression of the human orthologue of the TREK-1 potassium channel.</title>
        <authorList>
            <person name="Meadows H.J."/>
            <person name="Benham C.D."/>
            <person name="Cairns W."/>
            <person name="Gloger I."/>
            <person name="Jennings C."/>
            <person name="Medhurst A.D."/>
            <person name="Murdock P."/>
            <person name="Chapman C.G."/>
        </authorList>
    </citation>
    <scope>NUCLEOTIDE SEQUENCE [MRNA] (ISOFORM 2)</scope>
    <scope>FUNCTION</scope>
    <scope>TRANSPORTER ACTIVITY</scope>
    <scope>ACTIVITY REGULATION</scope>
    <source>
        <tissue>Brain</tissue>
    </source>
</reference>
<reference key="3">
    <citation type="submission" date="1997-05" db="EMBL/GenBank/DDBJ databases">
        <authorList>
            <person name="Price L.A."/>
            <person name="Hellings S.E."/>
            <person name="Hayashi J.H."/>
            <person name="Pausch M.H."/>
        </authorList>
    </citation>
    <scope>NUCLEOTIDE SEQUENCE [MRNA] (ISOFORM 1)</scope>
    <source>
        <tissue>Brain</tissue>
    </source>
</reference>
<reference key="4">
    <citation type="journal article" date="2014" name="Pflugers Arch.">
        <title>A splice variant of the two-pore domain potassium channel TREK-1 with only one pore domain reduces the surface expression of full-length TREK-1 channels.</title>
        <authorList>
            <person name="Rinne S."/>
            <person name="Renigunta V."/>
            <person name="Schlichthorl G."/>
            <person name="Zuzarte M."/>
            <person name="Bittner S."/>
            <person name="Meuth S.G."/>
            <person name="Decher N."/>
            <person name="Daut J."/>
            <person name="Preisig-Muller R."/>
        </authorList>
    </citation>
    <scope>NUCLEOTIDE SEQUENCE [MRNA] (ISOFORMS 3 AND 4)</scope>
    <scope>ALTERNATIVE SPLICING</scope>
    <scope>TISSUE SPECIFICITY</scope>
</reference>
<reference key="5">
    <citation type="submission" date="2006-12" db="EMBL/GenBank/DDBJ databases">
        <authorList>
            <person name="Thomas D."/>
            <person name="Sullivan A.N."/>
            <person name="Goldstein S.A."/>
        </authorList>
    </citation>
    <scope>NUCLEOTIDE SEQUENCE [MRNA] (ISOFORM 1)</scope>
    <source>
        <tissue>Brain</tissue>
        <tissue>Heart</tissue>
    </source>
</reference>
<reference key="6">
    <citation type="journal article" date="2004" name="Nat. Genet.">
        <title>Complete sequencing and characterization of 21,243 full-length human cDNAs.</title>
        <authorList>
            <person name="Ota T."/>
            <person name="Suzuki Y."/>
            <person name="Nishikawa T."/>
            <person name="Otsuki T."/>
            <person name="Sugiyama T."/>
            <person name="Irie R."/>
            <person name="Wakamatsu A."/>
            <person name="Hayashi K."/>
            <person name="Sato H."/>
            <person name="Nagai K."/>
            <person name="Kimura K."/>
            <person name="Makita H."/>
            <person name="Sekine M."/>
            <person name="Obayashi M."/>
            <person name="Nishi T."/>
            <person name="Shibahara T."/>
            <person name="Tanaka T."/>
            <person name="Ishii S."/>
            <person name="Yamamoto J."/>
            <person name="Saito K."/>
            <person name="Kawai Y."/>
            <person name="Isono Y."/>
            <person name="Nakamura Y."/>
            <person name="Nagahari K."/>
            <person name="Murakami K."/>
            <person name="Yasuda T."/>
            <person name="Iwayanagi T."/>
            <person name="Wagatsuma M."/>
            <person name="Shiratori A."/>
            <person name="Sudo H."/>
            <person name="Hosoiri T."/>
            <person name="Kaku Y."/>
            <person name="Kodaira H."/>
            <person name="Kondo H."/>
            <person name="Sugawara M."/>
            <person name="Takahashi M."/>
            <person name="Kanda K."/>
            <person name="Yokoi T."/>
            <person name="Furuya T."/>
            <person name="Kikkawa E."/>
            <person name="Omura Y."/>
            <person name="Abe K."/>
            <person name="Kamihara K."/>
            <person name="Katsuta N."/>
            <person name="Sato K."/>
            <person name="Tanikawa M."/>
            <person name="Yamazaki M."/>
            <person name="Ninomiya K."/>
            <person name="Ishibashi T."/>
            <person name="Yamashita H."/>
            <person name="Murakawa K."/>
            <person name="Fujimori K."/>
            <person name="Tanai H."/>
            <person name="Kimata M."/>
            <person name="Watanabe M."/>
            <person name="Hiraoka S."/>
            <person name="Chiba Y."/>
            <person name="Ishida S."/>
            <person name="Ono Y."/>
            <person name="Takiguchi S."/>
            <person name="Watanabe S."/>
            <person name="Yosida M."/>
            <person name="Hotuta T."/>
            <person name="Kusano J."/>
            <person name="Kanehori K."/>
            <person name="Takahashi-Fujii A."/>
            <person name="Hara H."/>
            <person name="Tanase T.-O."/>
            <person name="Nomura Y."/>
            <person name="Togiya S."/>
            <person name="Komai F."/>
            <person name="Hara R."/>
            <person name="Takeuchi K."/>
            <person name="Arita M."/>
            <person name="Imose N."/>
            <person name="Musashino K."/>
            <person name="Yuuki H."/>
            <person name="Oshima A."/>
            <person name="Sasaki N."/>
            <person name="Aotsuka S."/>
            <person name="Yoshikawa Y."/>
            <person name="Matsunawa H."/>
            <person name="Ichihara T."/>
            <person name="Shiohata N."/>
            <person name="Sano S."/>
            <person name="Moriya S."/>
            <person name="Momiyama H."/>
            <person name="Satoh N."/>
            <person name="Takami S."/>
            <person name="Terashima Y."/>
            <person name="Suzuki O."/>
            <person name="Nakagawa S."/>
            <person name="Senoh A."/>
            <person name="Mizoguchi H."/>
            <person name="Goto Y."/>
            <person name="Shimizu F."/>
            <person name="Wakebe H."/>
            <person name="Hishigaki H."/>
            <person name="Watanabe T."/>
            <person name="Sugiyama A."/>
            <person name="Takemoto M."/>
            <person name="Kawakami B."/>
            <person name="Yamazaki M."/>
            <person name="Watanabe K."/>
            <person name="Kumagai A."/>
            <person name="Itakura S."/>
            <person name="Fukuzumi Y."/>
            <person name="Fujimori Y."/>
            <person name="Komiyama M."/>
            <person name="Tashiro H."/>
            <person name="Tanigami A."/>
            <person name="Fujiwara T."/>
            <person name="Ono T."/>
            <person name="Yamada K."/>
            <person name="Fujii Y."/>
            <person name="Ozaki K."/>
            <person name="Hirao M."/>
            <person name="Ohmori Y."/>
            <person name="Kawabata A."/>
            <person name="Hikiji T."/>
            <person name="Kobatake N."/>
            <person name="Inagaki H."/>
            <person name="Ikema Y."/>
            <person name="Okamoto S."/>
            <person name="Okitani R."/>
            <person name="Kawakami T."/>
            <person name="Noguchi S."/>
            <person name="Itoh T."/>
            <person name="Shigeta K."/>
            <person name="Senba T."/>
            <person name="Matsumura K."/>
            <person name="Nakajima Y."/>
            <person name="Mizuno T."/>
            <person name="Morinaga M."/>
            <person name="Sasaki M."/>
            <person name="Togashi T."/>
            <person name="Oyama M."/>
            <person name="Hata H."/>
            <person name="Watanabe M."/>
            <person name="Komatsu T."/>
            <person name="Mizushima-Sugano J."/>
            <person name="Satoh T."/>
            <person name="Shirai Y."/>
            <person name="Takahashi Y."/>
            <person name="Nakagawa K."/>
            <person name="Okumura K."/>
            <person name="Nagase T."/>
            <person name="Nomura N."/>
            <person name="Kikuchi H."/>
            <person name="Masuho Y."/>
            <person name="Yamashita R."/>
            <person name="Nakai K."/>
            <person name="Yada T."/>
            <person name="Nakamura Y."/>
            <person name="Ohara O."/>
            <person name="Isogai T."/>
            <person name="Sugano S."/>
        </authorList>
    </citation>
    <scope>NUCLEOTIDE SEQUENCE [LARGE SCALE MRNA] (ISOFORMS 1 AND 2)</scope>
    <source>
        <tissue>Brain</tissue>
    </source>
</reference>
<reference key="7">
    <citation type="journal article" date="2006" name="Nature">
        <title>The DNA sequence and biological annotation of human chromosome 1.</title>
        <authorList>
            <person name="Gregory S.G."/>
            <person name="Barlow K.F."/>
            <person name="McLay K.E."/>
            <person name="Kaul R."/>
            <person name="Swarbreck D."/>
            <person name="Dunham A."/>
            <person name="Scott C.E."/>
            <person name="Howe K.L."/>
            <person name="Woodfine K."/>
            <person name="Spencer C.C.A."/>
            <person name="Jones M.C."/>
            <person name="Gillson C."/>
            <person name="Searle S."/>
            <person name="Zhou Y."/>
            <person name="Kokocinski F."/>
            <person name="McDonald L."/>
            <person name="Evans R."/>
            <person name="Phillips K."/>
            <person name="Atkinson A."/>
            <person name="Cooper R."/>
            <person name="Jones C."/>
            <person name="Hall R.E."/>
            <person name="Andrews T.D."/>
            <person name="Lloyd C."/>
            <person name="Ainscough R."/>
            <person name="Almeida J.P."/>
            <person name="Ambrose K.D."/>
            <person name="Anderson F."/>
            <person name="Andrew R.W."/>
            <person name="Ashwell R.I.S."/>
            <person name="Aubin K."/>
            <person name="Babbage A.K."/>
            <person name="Bagguley C.L."/>
            <person name="Bailey J."/>
            <person name="Beasley H."/>
            <person name="Bethel G."/>
            <person name="Bird C.P."/>
            <person name="Bray-Allen S."/>
            <person name="Brown J.Y."/>
            <person name="Brown A.J."/>
            <person name="Buckley D."/>
            <person name="Burton J."/>
            <person name="Bye J."/>
            <person name="Carder C."/>
            <person name="Chapman J.C."/>
            <person name="Clark S.Y."/>
            <person name="Clarke G."/>
            <person name="Clee C."/>
            <person name="Cobley V."/>
            <person name="Collier R.E."/>
            <person name="Corby N."/>
            <person name="Coville G.J."/>
            <person name="Davies J."/>
            <person name="Deadman R."/>
            <person name="Dunn M."/>
            <person name="Earthrowl M."/>
            <person name="Ellington A.G."/>
            <person name="Errington H."/>
            <person name="Frankish A."/>
            <person name="Frankland J."/>
            <person name="French L."/>
            <person name="Garner P."/>
            <person name="Garnett J."/>
            <person name="Gay L."/>
            <person name="Ghori M.R.J."/>
            <person name="Gibson R."/>
            <person name="Gilby L.M."/>
            <person name="Gillett W."/>
            <person name="Glithero R.J."/>
            <person name="Grafham D.V."/>
            <person name="Griffiths C."/>
            <person name="Griffiths-Jones S."/>
            <person name="Grocock R."/>
            <person name="Hammond S."/>
            <person name="Harrison E.S.I."/>
            <person name="Hart E."/>
            <person name="Haugen E."/>
            <person name="Heath P.D."/>
            <person name="Holmes S."/>
            <person name="Holt K."/>
            <person name="Howden P.J."/>
            <person name="Hunt A.R."/>
            <person name="Hunt S.E."/>
            <person name="Hunter G."/>
            <person name="Isherwood J."/>
            <person name="James R."/>
            <person name="Johnson C."/>
            <person name="Johnson D."/>
            <person name="Joy A."/>
            <person name="Kay M."/>
            <person name="Kershaw J.K."/>
            <person name="Kibukawa M."/>
            <person name="Kimberley A.M."/>
            <person name="King A."/>
            <person name="Knights A.J."/>
            <person name="Lad H."/>
            <person name="Laird G."/>
            <person name="Lawlor S."/>
            <person name="Leongamornlert D.A."/>
            <person name="Lloyd D.M."/>
            <person name="Loveland J."/>
            <person name="Lovell J."/>
            <person name="Lush M.J."/>
            <person name="Lyne R."/>
            <person name="Martin S."/>
            <person name="Mashreghi-Mohammadi M."/>
            <person name="Matthews L."/>
            <person name="Matthews N.S.W."/>
            <person name="McLaren S."/>
            <person name="Milne S."/>
            <person name="Mistry S."/>
            <person name="Moore M.J.F."/>
            <person name="Nickerson T."/>
            <person name="O'Dell C.N."/>
            <person name="Oliver K."/>
            <person name="Palmeiri A."/>
            <person name="Palmer S.A."/>
            <person name="Parker A."/>
            <person name="Patel D."/>
            <person name="Pearce A.V."/>
            <person name="Peck A.I."/>
            <person name="Pelan S."/>
            <person name="Phelps K."/>
            <person name="Phillimore B.J."/>
            <person name="Plumb R."/>
            <person name="Rajan J."/>
            <person name="Raymond C."/>
            <person name="Rouse G."/>
            <person name="Saenphimmachak C."/>
            <person name="Sehra H.K."/>
            <person name="Sheridan E."/>
            <person name="Shownkeen R."/>
            <person name="Sims S."/>
            <person name="Skuce C.D."/>
            <person name="Smith M."/>
            <person name="Steward C."/>
            <person name="Subramanian S."/>
            <person name="Sycamore N."/>
            <person name="Tracey A."/>
            <person name="Tromans A."/>
            <person name="Van Helmond Z."/>
            <person name="Wall M."/>
            <person name="Wallis J.M."/>
            <person name="White S."/>
            <person name="Whitehead S.L."/>
            <person name="Wilkinson J.E."/>
            <person name="Willey D.L."/>
            <person name="Williams H."/>
            <person name="Wilming L."/>
            <person name="Wray P.W."/>
            <person name="Wu Z."/>
            <person name="Coulson A."/>
            <person name="Vaudin M."/>
            <person name="Sulston J.E."/>
            <person name="Durbin R.M."/>
            <person name="Hubbard T."/>
            <person name="Wooster R."/>
            <person name="Dunham I."/>
            <person name="Carter N.P."/>
            <person name="McVean G."/>
            <person name="Ross M.T."/>
            <person name="Harrow J."/>
            <person name="Olson M.V."/>
            <person name="Beck S."/>
            <person name="Rogers J."/>
            <person name="Bentley D.R."/>
        </authorList>
    </citation>
    <scope>NUCLEOTIDE SEQUENCE [LARGE SCALE GENOMIC DNA]</scope>
</reference>
<reference key="8">
    <citation type="submission" date="2005-09" db="EMBL/GenBank/DDBJ databases">
        <authorList>
            <person name="Mural R.J."/>
            <person name="Istrail S."/>
            <person name="Sutton G.G."/>
            <person name="Florea L."/>
            <person name="Halpern A.L."/>
            <person name="Mobarry C.M."/>
            <person name="Lippert R."/>
            <person name="Walenz B."/>
            <person name="Shatkay H."/>
            <person name="Dew I."/>
            <person name="Miller J.R."/>
            <person name="Flanigan M.J."/>
            <person name="Edwards N.J."/>
            <person name="Bolanos R."/>
            <person name="Fasulo D."/>
            <person name="Halldorsson B.V."/>
            <person name="Hannenhalli S."/>
            <person name="Turner R."/>
            <person name="Yooseph S."/>
            <person name="Lu F."/>
            <person name="Nusskern D.R."/>
            <person name="Shue B.C."/>
            <person name="Zheng X.H."/>
            <person name="Zhong F."/>
            <person name="Delcher A.L."/>
            <person name="Huson D.H."/>
            <person name="Kravitz S.A."/>
            <person name="Mouchard L."/>
            <person name="Reinert K."/>
            <person name="Remington K.A."/>
            <person name="Clark A.G."/>
            <person name="Waterman M.S."/>
            <person name="Eichler E.E."/>
            <person name="Adams M.D."/>
            <person name="Hunkapiller M.W."/>
            <person name="Myers E.W."/>
            <person name="Venter J.C."/>
        </authorList>
    </citation>
    <scope>NUCLEOTIDE SEQUENCE [LARGE SCALE GENOMIC DNA]</scope>
</reference>
<reference key="9">
    <citation type="journal article" date="2004" name="Genome Res.">
        <title>The status, quality, and expansion of the NIH full-length cDNA project: the Mammalian Gene Collection (MGC).</title>
        <authorList>
            <consortium name="The MGC Project Team"/>
        </authorList>
    </citation>
    <scope>NUCLEOTIDE SEQUENCE [LARGE SCALE MRNA] (ISOFORM 2)</scope>
    <source>
        <tissue>Lung</tissue>
    </source>
</reference>
<reference key="10">
    <citation type="journal article" date="2001" name="Nat. Neurosci.">
        <title>KCNK2: reversible conversion of a hippocampal potassium leak into a voltage-dependent channel.</title>
        <authorList>
            <person name="Bockenhauer D."/>
            <person name="Zilberberg N."/>
            <person name="Goldstein S.A."/>
        </authorList>
    </citation>
    <scope>FUNCTION</scope>
    <scope>TRANSPORTER ACTIVITY</scope>
    <scope>ACTIVITY REGULATION</scope>
    <scope>PHOSPHORYLATION AT SER-348</scope>
    <scope>MUTAGENESIS OF SER-348</scope>
</reference>
<reference key="11">
    <citation type="journal article" date="2012" name="Sci. Signal.">
        <title>SUMOylation silences heterodimeric TASK potassium channels containing K2P1 subunits in cerebellar granule neurons.</title>
        <authorList>
            <person name="Plant L.D."/>
            <person name="Zuniga L."/>
            <person name="Araki D."/>
            <person name="Marks J.D."/>
            <person name="Goldstein S.A."/>
        </authorList>
    </citation>
    <scope>FUNCTION</scope>
    <scope>SUBCELLULAR LOCATION (ISOFORM 3)</scope>
</reference>
<reference key="12">
    <citation type="journal article" date="2016" name="J. Clin. Invest.">
        <title>POPDC1S201F causes muscular dystrophy and arrhythmia by affecting protein trafficking.</title>
        <authorList>
            <person name="Schindler R.F."/>
            <person name="Scotton C."/>
            <person name="Zhang J."/>
            <person name="Passarelli C."/>
            <person name="Ortiz-Bonnin B."/>
            <person name="Simrick S."/>
            <person name="Schwerte T."/>
            <person name="Poon K.L."/>
            <person name="Fang M."/>
            <person name="Rinne S."/>
            <person name="Froese A."/>
            <person name="Nikolaev V.O."/>
            <person name="Grunert C."/>
            <person name="Mueller T."/>
            <person name="Tasca G."/>
            <person name="Sarathchandra P."/>
            <person name="Drago F."/>
            <person name="Dallapiccola B."/>
            <person name="Rapezzi C."/>
            <person name="Arbustini E."/>
            <person name="Di Raimo F.R."/>
            <person name="Neri M."/>
            <person name="Selvatici R."/>
            <person name="Gualandi F."/>
            <person name="Fattori F."/>
            <person name="Pietrangelo A."/>
            <person name="Li W."/>
            <person name="Jiang H."/>
            <person name="Xu X."/>
            <person name="Bertini E."/>
            <person name="Decher N."/>
            <person name="Wang J."/>
            <person name="Brand T."/>
            <person name="Ferlini A."/>
        </authorList>
    </citation>
    <scope>INTERACTION WITH POPDC1</scope>
</reference>
<reference key="13">
    <citation type="journal article" date="2019" name="Neuron">
        <title>Migraine-Associated TRESK Mutations Increase Neuronal Excitability through Alternative Translation Initiation and Inhibition of TREK.</title>
        <authorList>
            <person name="Royal P."/>
            <person name="Andres-Bilbe A."/>
            <person name="Avalos Prado P."/>
            <person name="Verkest C."/>
            <person name="Wdziekonski B."/>
            <person name="Schaub S."/>
            <person name="Baron A."/>
            <person name="Lesage F."/>
            <person name="Gasull X."/>
            <person name="Levitz J."/>
            <person name="Sandoz G."/>
        </authorList>
    </citation>
    <scope>FUNCTION</scope>
</reference>
<reference key="14">
    <citation type="journal article" date="2024" name="Nat. Commun.">
        <title>Tension activation of mechanosensitive two-pore domain K+ channels TRAAK, TREK-1, and TREK-2.</title>
        <authorList>
            <person name="Sorum B."/>
            <person name="Docter T."/>
            <person name="Panico V."/>
            <person name="Rietmeijer R.A."/>
            <person name="Brohawn S.G."/>
        </authorList>
    </citation>
    <scope>FUNCTION</scope>
    <scope>ACTIVITY REGULATION</scope>
</reference>
<reference key="15">
    <citation type="submission" date="2014-06" db="PDB data bank">
        <title>Crystal structure of human two pore domain potassium ion channel TREK1 (K2P2.1).</title>
        <authorList>
            <consortium name="Structural genomics consortium (SGC)"/>
        </authorList>
    </citation>
    <scope>X-RAY CRYSTALLOGRAPHY (2.60 ANGSTROMS) OF 41-315 IN COMPLEX WITH POTASSIUM IONS</scope>
    <scope>DISULFIDE BOND</scope>
    <scope>GLYCOSYLATION AT ASN-110</scope>
    <scope>SUBUNIT</scope>
</reference>
<comment type="function">
    <text evidence="3 4 6 7 8 9 12 13">K(+) channel that conducts voltage-dependent outward rectifying currents upon membrane depolarization. Voltage sensing is coupled to K(+) electrochemical gradient in an 'ion flux gating' mode where outward but not inward ion flow opens the gate. Converts to voltage-independent 'leak' conductance mode upon stimulation by various stimuli including mechanical membrane stretch, acidic pH, heat and lipids. Reversibly converts between a voltage-insensitive K(+) 'leak' channel and a voltage-dependent outward rectifying K(+) channel in a phosphorylation-dependent manner (By similarity) (PubMed:10321245, PubMed:10784345, PubMed:11319556, PubMed:23169818, PubMed:30573346, PubMed:38605031). Homo- and heterodimerizes to form functional channels with distinct regulatory and gating properties (By similarity). In trigeminal ganglia sensory neurons, the heterodimer of KCNK2/TREK-1 and KCNK18/TRESK inhibits neuronal firing and neurogenic inflammation by stabilizing the resting membrane potential at K(+) equilibrium potential as well as by regulating the threshold of action potentials and the spike frequency (By similarity). At trigeminal A-beta afferent nerves, the heterodimer of KCNK2/TREK-1 and KCNK4/TRAAK is mostly coexpressed at nodes of Ranvier where it conducts voltage-independent mechanosensitive and thermosensitive currents, allowing rapid action potential repolarization, high speed and high frequence saltatory conduction on myelinated nerves to ensure prompt sensory responses (By similarity). In hippocampal astrocytes, the heterodimer of KCNK2/TREK-1 and KCNK1/TWIK-1 allows passive K(+) conductance under basal conditions, but changes ion selectivity and becomes permeable to L-glutamate and Cl(-) ions upon binding to G-protein subunit GNG4 in stimulated astrocytes. Mediates rapid L-glutamate release in response to activation of G-protein-coupled receptors, such as F2R and CNR1 (By similarity). In hippocampal pyramidal neurons, the homodimer of KCNK2/TREK-1 contributes to gamma-aminobutyric acid (GABA) B-induced slow inhibitory postsynaptic potential. Associates with AKAP5 and Gs-protein-coupled receptor B2AR at postsynaptic dense bodies and converts to a leak channel no longer sensitive to stimulation by arachidonic acid, acidic pH or mechanical stress, nor inhibited by Gq-coupled receptors but still under the negative control of Gs-coupled receptors (By similarity). Permeable to other monovalent cations such as Rb(+) and Cs(+) (By similarity).</text>
</comment>
<comment type="function">
    <molecule>Isoform 4</molecule>
    <text evidence="4">Does not display channel activity but reduces the channel activity of isoform 1 and isoform 2 and reduces cell surface expression of isoform 2.</text>
</comment>
<comment type="catalytic activity">
    <reaction evidence="6 7 8">
        <text>K(+)(in) = K(+)(out)</text>
        <dbReference type="Rhea" id="RHEA:29463"/>
        <dbReference type="ChEBI" id="CHEBI:29103"/>
    </reaction>
</comment>
<comment type="catalytic activity">
    <reaction evidence="3 4">
        <text>L-glutamate(out) = L-glutamate(in)</text>
        <dbReference type="Rhea" id="RHEA:66336"/>
        <dbReference type="ChEBI" id="CHEBI:29985"/>
    </reaction>
</comment>
<comment type="catalytic activity">
    <reaction evidence="3 4">
        <text>chloride(in) = chloride(out)</text>
        <dbReference type="Rhea" id="RHEA:29823"/>
        <dbReference type="ChEBI" id="CHEBI:17996"/>
    </reaction>
</comment>
<comment type="catalytic activity">
    <reaction evidence="4">
        <text>Rb(+)(in) = Rb(+)(out)</text>
        <dbReference type="Rhea" id="RHEA:78547"/>
        <dbReference type="ChEBI" id="CHEBI:49847"/>
    </reaction>
</comment>
<comment type="catalytic activity">
    <reaction evidence="4">
        <text>Cs(+)(in) = Cs(+)(out)</text>
        <dbReference type="Rhea" id="RHEA:78555"/>
        <dbReference type="ChEBI" id="CHEBI:49547"/>
    </reaction>
</comment>
<comment type="activity regulation">
    <text evidence="6 7 8 13">Activated by various stimuli including intracellular acidic pH, mechanical stretch and polyunsaturated fatty acids such as arachidonic acid. Activated by volatile anesthetics such as chloroform, halothane, and isoflurane.</text>
</comment>
<comment type="subunit">
    <text evidence="3 4 11 14">Homodimer; disulfide-linked (Ref.15). Forms heterodimers with other 2-pore domain K(+) channel subunits, such as KCNK1, KCNK4, KCNK10 and KCNK18 (By similarity). Interacts with AKAP5; the channel is recruited to postsynaptic microdomains by AKAP5 where it can integrate neurotransmitter receptor signals. Part of a complex composed of AKAP5 and ADRB2. Upon AKAP5 binding, the channel is no longer sensitive to intracellular acidification, membrane stretch or arachidonic acid stimuli (By similarity). Interacts with POPDC1; the interaction enhances KCNK2 surface expression and is inhibited by cAMP (PubMed:26642364). Interacts (via N-terminus) with G-protein subunit GNG4 (via C-terminus); this interaction confers ion selectivity to L-glutamate and Cl(-) anions (By similarity).</text>
</comment>
<comment type="subcellular location">
    <molecule>Isoform 2</molecule>
    <subcellularLocation>
        <location evidence="7">Cell membrane</location>
        <topology evidence="5">Multi-pass membrane protein</topology>
    </subcellularLocation>
</comment>
<comment type="subcellular location">
    <molecule>Isoform 3</molecule>
    <subcellularLocation>
        <location evidence="9">Cell membrane</location>
        <topology evidence="5">Multi-pass membrane protein</topology>
    </subcellularLocation>
</comment>
<comment type="subcellular location">
    <molecule>Isoform 4</molecule>
    <subcellularLocation>
        <location evidence="4">Endoplasmic reticulum membrane</location>
        <topology evidence="5">Multi-pass membrane protein</topology>
    </subcellularLocation>
</comment>
<comment type="subcellular location">
    <subcellularLocation>
        <location evidence="4">Cell projection</location>
        <location evidence="4">Axon</location>
    </subcellularLocation>
    <subcellularLocation>
        <location evidence="3">Cell projection</location>
        <location evidence="3">Dendrite</location>
    </subcellularLocation>
    <subcellularLocation>
        <location evidence="3">Postsynaptic density membrane</location>
        <topology evidence="5">Multi-pass membrane protein</topology>
    </subcellularLocation>
    <subcellularLocation>
        <location evidence="4">Cell membrane</location>
        <location evidence="4">Sarcolemma</location>
        <topology evidence="5">Multi-pass membrane protein</topology>
    </subcellularLocation>
    <text evidence="4">Localizes at the Ranvier nodes of myelinated afferent nerves.</text>
</comment>
<comment type="alternative products">
    <event type="alternative splicing"/>
    <isoform>
        <id>O95069-1</id>
        <name>1</name>
        <name>TREK-1b</name>
        <sequence type="displayed"/>
    </isoform>
    <isoform>
        <id>O95069-2</id>
        <name>2</name>
        <name>TREK-1a</name>
        <sequence type="described" ref="VSP_024429"/>
    </isoform>
    <isoform>
        <id>O95069-3</id>
        <name>3</name>
        <name>TREK-1c</name>
        <sequence type="described" ref="VSP_024428"/>
    </isoform>
    <isoform>
        <id>O95069-4</id>
        <name>4</name>
        <name>TREK-1e</name>
        <sequence type="described" ref="VSP_024428 VSP_047567 VSP_047568"/>
    </isoform>
</comment>
<comment type="tissue specificity">
    <molecule>Isoform 3</molecule>
    <text evidence="10">Detected in kidney, adrenal gland and brain where it is preferentially expressed in the amygdala but not found in thalamus, hypothalamus, hippocampus or substantia nigra.</text>
</comment>
<comment type="domain">
    <text evidence="2">Each subunit contributes two pore-forming domains 1 and 2 which assemble to form a single pore with M2 and M4 transmembrane helices lining the central cavity and M1 and M3 facing the lipid bilayer. The transmembrane helices are bridged by the selectivity filters 1 and 2 carrying a signature sequence TxTTxGYGD that coordinate the permeant ions. Up to four ions can simultaneously occupy the selectivity filter and at least two elementary charges must translocate across the filter to convert it into the open conformation.</text>
</comment>
<comment type="domain">
    <molecule>Isoform 4</molecule>
    <text evidence="1">The C-terminal region of isoform 4 mediates its intracellular retention.</text>
</comment>
<comment type="PTM">
    <text evidence="8">Phosphorylation at Ser-348 controls the reversible conversion from a leak channel to a voltage-dependent channel.</text>
</comment>
<comment type="similarity">
    <text evidence="22">Belongs to the two pore domain potassium channel (TC 1.A.1.8) family.</text>
</comment>
<proteinExistence type="evidence at protein level"/>
<keyword id="KW-0002">3D-structure</keyword>
<keyword id="KW-0025">Alternative splicing</keyword>
<keyword id="KW-1003">Cell membrane</keyword>
<keyword id="KW-0966">Cell projection</keyword>
<keyword id="KW-1015">Disulfide bond</keyword>
<keyword id="KW-0256">Endoplasmic reticulum</keyword>
<keyword id="KW-0325">Glycoprotein</keyword>
<keyword id="KW-0407">Ion channel</keyword>
<keyword id="KW-0406">Ion transport</keyword>
<keyword id="KW-0472">Membrane</keyword>
<keyword id="KW-0479">Metal-binding</keyword>
<keyword id="KW-0597">Phosphoprotein</keyword>
<keyword id="KW-0628">Postsynaptic cell membrane</keyword>
<keyword id="KW-0630">Potassium</keyword>
<keyword id="KW-0631">Potassium channel</keyword>
<keyword id="KW-0633">Potassium transport</keyword>
<keyword id="KW-1267">Proteomics identification</keyword>
<keyword id="KW-1185">Reference proteome</keyword>
<keyword id="KW-0770">Synapse</keyword>
<keyword id="KW-0812">Transmembrane</keyword>
<keyword id="KW-1133">Transmembrane helix</keyword>
<keyword id="KW-0813">Transport</keyword>
<evidence type="ECO:0000250" key="1"/>
<evidence type="ECO:0000250" key="2">
    <source>
        <dbReference type="UniProtKB" id="P57789"/>
    </source>
</evidence>
<evidence type="ECO:0000250" key="3">
    <source>
        <dbReference type="UniProtKB" id="P97438"/>
    </source>
</evidence>
<evidence type="ECO:0000250" key="4">
    <source>
        <dbReference type="UniProtKB" id="Q920B6"/>
    </source>
</evidence>
<evidence type="ECO:0000255" key="5"/>
<evidence type="ECO:0000269" key="6">
    <source>
    </source>
</evidence>
<evidence type="ECO:0000269" key="7">
    <source>
    </source>
</evidence>
<evidence type="ECO:0000269" key="8">
    <source>
    </source>
</evidence>
<evidence type="ECO:0000269" key="9">
    <source>
    </source>
</evidence>
<evidence type="ECO:0000269" key="10">
    <source>
    </source>
</evidence>
<evidence type="ECO:0000269" key="11">
    <source>
    </source>
</evidence>
<evidence type="ECO:0000269" key="12">
    <source>
    </source>
</evidence>
<evidence type="ECO:0000269" key="13">
    <source>
    </source>
</evidence>
<evidence type="ECO:0000269" key="14">
    <source ref="15"/>
</evidence>
<evidence type="ECO:0000303" key="15">
    <source>
    </source>
</evidence>
<evidence type="ECO:0000303" key="16">
    <source>
    </source>
</evidence>
<evidence type="ECO:0000303" key="17">
    <source>
    </source>
</evidence>
<evidence type="ECO:0000303" key="18">
    <source>
    </source>
</evidence>
<evidence type="ECO:0000303" key="19">
    <source>
    </source>
</evidence>
<evidence type="ECO:0000303" key="20">
    <source>
    </source>
</evidence>
<evidence type="ECO:0000303" key="21">
    <source ref="15"/>
</evidence>
<evidence type="ECO:0000305" key="22"/>
<evidence type="ECO:0000312" key="23">
    <source>
        <dbReference type="HGNC" id="HGNC:6277"/>
    </source>
</evidence>
<evidence type="ECO:0007744" key="24">
    <source>
        <dbReference type="PDB" id="4TWK"/>
    </source>
</evidence>
<evidence type="ECO:0007829" key="25">
    <source>
        <dbReference type="PDB" id="4TWK"/>
    </source>
</evidence>
<sequence length="426" mass="47093">MLPSASRERPGYRAGVAAPDLLDPKSAAQNSKPRLSFSTKPTVLASRVESDTTINVMKWKTVSTIFLVVVLYLIIGATVFKALEQPHEISQRTTIVIQKQTFISQHSCVNSTELDELIQQIVAAINAGIIPLGNTSNQISHWDLGSSFFFAGTVITTIGFGNISPRTEGGKIFCIIYALLGIPLFGFLLAGVGDQLGTIFGKGIAKVEDTFIKWNVSQTKIRIISTIIFILFGCVLFVALPAIIFKHIEGWSALDAIYFVVITLTTIGFGDYVAGGSDIEYLDFYKPVVWFWILVGLAYFAAVLSMIGDWLRVISKKTKEEVGEFRAHAAEWTANVTAEFKETRRRLSVEIYDKFQRATSIKRKLSAELAGNHNQELTPCRRTLSVNHLTSERDVLPPLLKTESIYLNGLTPHCAGEEIAVIENIK</sequence>
<dbReference type="EMBL" id="AF129399">
    <property type="protein sequence ID" value="AAD47569.1"/>
    <property type="molecule type" value="mRNA"/>
</dbReference>
<dbReference type="EMBL" id="AF171068">
    <property type="protein sequence ID" value="AAF89743.1"/>
    <property type="molecule type" value="mRNA"/>
</dbReference>
<dbReference type="EMBL" id="AF004711">
    <property type="protein sequence ID" value="AAD01203.1"/>
    <property type="molecule type" value="mRNA"/>
</dbReference>
<dbReference type="EMBL" id="AY552980">
    <property type="protein sequence ID" value="AAT49015.2"/>
    <property type="molecule type" value="mRNA"/>
</dbReference>
<dbReference type="EMBL" id="AY552981">
    <property type="protein sequence ID" value="AAT49016.1"/>
    <property type="molecule type" value="mRNA"/>
</dbReference>
<dbReference type="EMBL" id="EF165334">
    <property type="protein sequence ID" value="ABM47413.1"/>
    <property type="molecule type" value="mRNA"/>
</dbReference>
<dbReference type="EMBL" id="EF165335">
    <property type="protein sequence ID" value="ABM47414.1"/>
    <property type="molecule type" value="mRNA"/>
</dbReference>
<dbReference type="EMBL" id="AK291483">
    <property type="protein sequence ID" value="BAF84172.1"/>
    <property type="molecule type" value="mRNA"/>
</dbReference>
<dbReference type="EMBL" id="AK315249">
    <property type="protein sequence ID" value="BAG37671.1"/>
    <property type="molecule type" value="mRNA"/>
</dbReference>
<dbReference type="EMBL" id="AC092804">
    <property type="status" value="NOT_ANNOTATED_CDS"/>
    <property type="molecule type" value="Genomic_DNA"/>
</dbReference>
<dbReference type="EMBL" id="AC099675">
    <property type="status" value="NOT_ANNOTATED_CDS"/>
    <property type="molecule type" value="Genomic_DNA"/>
</dbReference>
<dbReference type="EMBL" id="AL583830">
    <property type="status" value="NOT_ANNOTATED_CDS"/>
    <property type="molecule type" value="Genomic_DNA"/>
</dbReference>
<dbReference type="EMBL" id="CH471100">
    <property type="protein sequence ID" value="EAW93347.1"/>
    <property type="molecule type" value="Genomic_DNA"/>
</dbReference>
<dbReference type="EMBL" id="CH471100">
    <property type="protein sequence ID" value="EAW93349.1"/>
    <property type="molecule type" value="Genomic_DNA"/>
</dbReference>
<dbReference type="EMBL" id="BC069462">
    <property type="protein sequence ID" value="AAH69462.1"/>
    <property type="molecule type" value="mRNA"/>
</dbReference>
<dbReference type="EMBL" id="BC101693">
    <property type="protein sequence ID" value="AAI01694.1"/>
    <property type="molecule type" value="mRNA"/>
</dbReference>
<dbReference type="EMBL" id="BC101695">
    <property type="protein sequence ID" value="AAI01696.1"/>
    <property type="molecule type" value="mRNA"/>
</dbReference>
<dbReference type="EMBL" id="BC143586">
    <property type="protein sequence ID" value="AAI43587.1"/>
    <property type="molecule type" value="mRNA"/>
</dbReference>
<dbReference type="CCDS" id="CCDS31024.1">
    <molecule id="O95069-2"/>
</dbReference>
<dbReference type="CCDS" id="CCDS41466.1">
    <molecule id="O95069-3"/>
</dbReference>
<dbReference type="CCDS" id="CCDS41467.1">
    <molecule id="O95069-1"/>
</dbReference>
<dbReference type="RefSeq" id="NP_001017424.1">
    <molecule id="O95069-3"/>
    <property type="nucleotide sequence ID" value="NM_001017424.3"/>
</dbReference>
<dbReference type="RefSeq" id="NP_001017425.2">
    <molecule id="O95069-1"/>
    <property type="nucleotide sequence ID" value="NM_001017425.3"/>
</dbReference>
<dbReference type="RefSeq" id="NP_055032.1">
    <molecule id="O95069-2"/>
    <property type="nucleotide sequence ID" value="NM_014217.4"/>
</dbReference>
<dbReference type="RefSeq" id="XP_016856737.1">
    <property type="nucleotide sequence ID" value="XM_017001248.1"/>
</dbReference>
<dbReference type="PDB" id="4TWK">
    <property type="method" value="X-ray"/>
    <property type="resolution" value="2.60 A"/>
    <property type="chains" value="A/B=41-315"/>
</dbReference>
<dbReference type="PDBsum" id="4TWK"/>
<dbReference type="SMR" id="O95069"/>
<dbReference type="BioGRID" id="109977">
    <property type="interactions" value="1"/>
</dbReference>
<dbReference type="FunCoup" id="O95069">
    <property type="interactions" value="762"/>
</dbReference>
<dbReference type="STRING" id="9606.ENSP00000394033"/>
<dbReference type="BindingDB" id="O95069"/>
<dbReference type="ChEMBL" id="CHEMBL2321615"/>
<dbReference type="DrugBank" id="DB00204">
    <property type="generic name" value="Dofetilide"/>
</dbReference>
<dbReference type="DrugBank" id="DB04855">
    <property type="generic name" value="Dronedarone"/>
</dbReference>
<dbReference type="DrugCentral" id="O95069"/>
<dbReference type="GuidetoPHARMACOLOGY" id="514"/>
<dbReference type="GlyCosmos" id="O95069">
    <property type="glycosylation" value="2 sites, No reported glycans"/>
</dbReference>
<dbReference type="GlyGen" id="O95069">
    <property type="glycosylation" value="4 sites, 1 O-linked glycan (2 sites)"/>
</dbReference>
<dbReference type="iPTMnet" id="O95069"/>
<dbReference type="PhosphoSitePlus" id="O95069"/>
<dbReference type="BioMuta" id="KCNK2"/>
<dbReference type="MassIVE" id="O95069"/>
<dbReference type="PaxDb" id="9606-ENSP00000394033"/>
<dbReference type="PeptideAtlas" id="O95069"/>
<dbReference type="Antibodypedia" id="34619">
    <property type="antibodies" value="130 antibodies from 21 providers"/>
</dbReference>
<dbReference type="DNASU" id="3776"/>
<dbReference type="Ensembl" id="ENST00000391894.6">
    <molecule id="O95069-2"/>
    <property type="protein sequence ID" value="ENSP00000375764.2"/>
    <property type="gene ID" value="ENSG00000082482.14"/>
</dbReference>
<dbReference type="Ensembl" id="ENST00000391895.6">
    <molecule id="O95069-3"/>
    <property type="protein sequence ID" value="ENSP00000375765.2"/>
    <property type="gene ID" value="ENSG00000082482.14"/>
</dbReference>
<dbReference type="Ensembl" id="ENST00000444842.7">
    <molecule id="O95069-1"/>
    <property type="protein sequence ID" value="ENSP00000394033.2"/>
    <property type="gene ID" value="ENSG00000082482.14"/>
</dbReference>
<dbReference type="Ensembl" id="ENST00000467031.5">
    <molecule id="O95069-4"/>
    <property type="protein sequence ID" value="ENSP00000420203.1"/>
    <property type="gene ID" value="ENSG00000082482.14"/>
</dbReference>
<dbReference type="GeneID" id="3776"/>
<dbReference type="KEGG" id="hsa:3776"/>
<dbReference type="MANE-Select" id="ENST00000444842.7">
    <property type="protein sequence ID" value="ENSP00000394033.2"/>
    <property type="RefSeq nucleotide sequence ID" value="NM_001017425.3"/>
    <property type="RefSeq protein sequence ID" value="NP_001017425.2"/>
</dbReference>
<dbReference type="UCSC" id="uc001hkq.4">
    <molecule id="O95069-1"/>
    <property type="organism name" value="human"/>
</dbReference>
<dbReference type="AGR" id="HGNC:6277"/>
<dbReference type="CTD" id="3776"/>
<dbReference type="DisGeNET" id="3776"/>
<dbReference type="GeneCards" id="KCNK2"/>
<dbReference type="HGNC" id="HGNC:6277">
    <property type="gene designation" value="KCNK2"/>
</dbReference>
<dbReference type="HPA" id="ENSG00000082482">
    <property type="expression patterns" value="Tissue enriched (adrenal)"/>
</dbReference>
<dbReference type="MIM" id="603219">
    <property type="type" value="gene"/>
</dbReference>
<dbReference type="neXtProt" id="NX_O95069"/>
<dbReference type="OpenTargets" id="ENSG00000082482"/>
<dbReference type="PharmGKB" id="PA30059"/>
<dbReference type="VEuPathDB" id="HostDB:ENSG00000082482"/>
<dbReference type="eggNOG" id="KOG1418">
    <property type="taxonomic scope" value="Eukaryota"/>
</dbReference>
<dbReference type="GeneTree" id="ENSGT00940000156560"/>
<dbReference type="HOGENOM" id="CLU_022504_10_0_1"/>
<dbReference type="InParanoid" id="O95069"/>
<dbReference type="OMA" id="ANLCEDR"/>
<dbReference type="OrthoDB" id="297496at2759"/>
<dbReference type="PAN-GO" id="O95069">
    <property type="GO annotations" value="5 GO annotations based on evolutionary models"/>
</dbReference>
<dbReference type="PhylomeDB" id="O95069"/>
<dbReference type="TreeFam" id="TF313947"/>
<dbReference type="PathwayCommons" id="O95069"/>
<dbReference type="Reactome" id="R-HSA-1299503">
    <property type="pathway name" value="TWIK related potassium channel (TREK)"/>
</dbReference>
<dbReference type="Reactome" id="R-HSA-5576886">
    <property type="pathway name" value="Phase 4 - resting membrane potential"/>
</dbReference>
<dbReference type="SignaLink" id="O95069"/>
<dbReference type="BioGRID-ORCS" id="3776">
    <property type="hits" value="13 hits in 1161 CRISPR screens"/>
</dbReference>
<dbReference type="ChiTaRS" id="KCNK2">
    <property type="organism name" value="human"/>
</dbReference>
<dbReference type="EvolutionaryTrace" id="O95069"/>
<dbReference type="GeneWiki" id="KCNK2"/>
<dbReference type="GenomeRNAi" id="3776"/>
<dbReference type="Pharos" id="O95069">
    <property type="development level" value="Tclin"/>
</dbReference>
<dbReference type="PRO" id="PR:O95069"/>
<dbReference type="Proteomes" id="UP000005640">
    <property type="component" value="Chromosome 1"/>
</dbReference>
<dbReference type="RNAct" id="O95069">
    <property type="molecule type" value="protein"/>
</dbReference>
<dbReference type="Bgee" id="ENSG00000082482">
    <property type="expression patterns" value="Expressed in stromal cell of endometrium and 104 other cell types or tissues"/>
</dbReference>
<dbReference type="ExpressionAtlas" id="O95069">
    <property type="expression patterns" value="baseline and differential"/>
</dbReference>
<dbReference type="GO" id="GO:0016324">
    <property type="term" value="C:apical plasma membrane"/>
    <property type="evidence" value="ECO:0007669"/>
    <property type="project" value="Ensembl"/>
</dbReference>
<dbReference type="GO" id="GO:0097449">
    <property type="term" value="C:astrocyte projection"/>
    <property type="evidence" value="ECO:0000250"/>
    <property type="project" value="UniProtKB"/>
</dbReference>
<dbReference type="GO" id="GO:0044305">
    <property type="term" value="C:calyx of Held"/>
    <property type="evidence" value="ECO:0007669"/>
    <property type="project" value="Ensembl"/>
</dbReference>
<dbReference type="GO" id="GO:0009986">
    <property type="term" value="C:cell surface"/>
    <property type="evidence" value="ECO:0007669"/>
    <property type="project" value="Ensembl"/>
</dbReference>
<dbReference type="GO" id="GO:0030425">
    <property type="term" value="C:dendrite"/>
    <property type="evidence" value="ECO:0000250"/>
    <property type="project" value="UniProtKB"/>
</dbReference>
<dbReference type="GO" id="GO:0005783">
    <property type="term" value="C:endoplasmic reticulum"/>
    <property type="evidence" value="ECO:0000250"/>
    <property type="project" value="UniProtKB"/>
</dbReference>
<dbReference type="GO" id="GO:0005789">
    <property type="term" value="C:endoplasmic reticulum membrane"/>
    <property type="evidence" value="ECO:0007669"/>
    <property type="project" value="UniProtKB-SubCell"/>
</dbReference>
<dbReference type="GO" id="GO:0043025">
    <property type="term" value="C:neuronal cell body"/>
    <property type="evidence" value="ECO:0007669"/>
    <property type="project" value="Ensembl"/>
</dbReference>
<dbReference type="GO" id="GO:0033268">
    <property type="term" value="C:node of Ranvier"/>
    <property type="evidence" value="ECO:0000250"/>
    <property type="project" value="UniProtKB"/>
</dbReference>
<dbReference type="GO" id="GO:0005886">
    <property type="term" value="C:plasma membrane"/>
    <property type="evidence" value="ECO:0000250"/>
    <property type="project" value="UniProtKB"/>
</dbReference>
<dbReference type="GO" id="GO:0098839">
    <property type="term" value="C:postsynaptic density membrane"/>
    <property type="evidence" value="ECO:0007669"/>
    <property type="project" value="UniProtKB-SubCell"/>
</dbReference>
<dbReference type="GO" id="GO:0042383">
    <property type="term" value="C:sarcolemma"/>
    <property type="evidence" value="ECO:0007669"/>
    <property type="project" value="UniProtKB-SubCell"/>
</dbReference>
<dbReference type="GO" id="GO:0098685">
    <property type="term" value="C:Schaffer collateral - CA1 synapse"/>
    <property type="evidence" value="ECO:0007669"/>
    <property type="project" value="Ensembl"/>
</dbReference>
<dbReference type="GO" id="GO:0008076">
    <property type="term" value="C:voltage-gated potassium channel complex"/>
    <property type="evidence" value="ECO:0007669"/>
    <property type="project" value="Ensembl"/>
</dbReference>
<dbReference type="GO" id="GO:0042802">
    <property type="term" value="F:identical protein binding"/>
    <property type="evidence" value="ECO:0000250"/>
    <property type="project" value="UniProtKB"/>
</dbReference>
<dbReference type="GO" id="GO:0022834">
    <property type="term" value="F:ligand-gated channel activity"/>
    <property type="evidence" value="ECO:0000250"/>
    <property type="project" value="UniProtKB"/>
</dbReference>
<dbReference type="GO" id="GO:0098782">
    <property type="term" value="F:mechanosensitive potassium channel activity"/>
    <property type="evidence" value="ECO:0000314"/>
    <property type="project" value="UniProtKB"/>
</dbReference>
<dbReference type="GO" id="GO:0046872">
    <property type="term" value="F:metal ion binding"/>
    <property type="evidence" value="ECO:0007669"/>
    <property type="project" value="UniProtKB-KW"/>
</dbReference>
<dbReference type="GO" id="GO:0015271">
    <property type="term" value="F:outward rectifier potassium channel activity"/>
    <property type="evidence" value="ECO:0000250"/>
    <property type="project" value="UniProtKB"/>
</dbReference>
<dbReference type="GO" id="GO:0019870">
    <property type="term" value="F:potassium channel inhibitor activity"/>
    <property type="evidence" value="ECO:0000250"/>
    <property type="project" value="UniProtKB"/>
</dbReference>
<dbReference type="GO" id="GO:0022841">
    <property type="term" value="F:potassium ion leak channel activity"/>
    <property type="evidence" value="ECO:0000250"/>
    <property type="project" value="UniProtKB"/>
</dbReference>
<dbReference type="GO" id="GO:0046982">
    <property type="term" value="F:protein heterodimerization activity"/>
    <property type="evidence" value="ECO:0000250"/>
    <property type="project" value="UniProtKB"/>
</dbReference>
<dbReference type="GO" id="GO:0003231">
    <property type="term" value="P:cardiac ventricle development"/>
    <property type="evidence" value="ECO:0007669"/>
    <property type="project" value="Ensembl"/>
</dbReference>
<dbReference type="GO" id="GO:1904551">
    <property type="term" value="P:cellular response to arachidonate"/>
    <property type="evidence" value="ECO:0000250"/>
    <property type="project" value="UniProtKB"/>
</dbReference>
<dbReference type="GO" id="GO:0071456">
    <property type="term" value="P:cellular response to hypoxia"/>
    <property type="evidence" value="ECO:0007669"/>
    <property type="project" value="Ensembl"/>
</dbReference>
<dbReference type="GO" id="GO:0099565">
    <property type="term" value="P:chemical synaptic transmission, postsynaptic"/>
    <property type="evidence" value="ECO:0007669"/>
    <property type="project" value="Ensembl"/>
</dbReference>
<dbReference type="GO" id="GO:1902476">
    <property type="term" value="P:chloride transmembrane transport"/>
    <property type="evidence" value="ECO:0000250"/>
    <property type="project" value="UniProtKB"/>
</dbReference>
<dbReference type="GO" id="GO:0090102">
    <property type="term" value="P:cochlea development"/>
    <property type="evidence" value="ECO:0007669"/>
    <property type="project" value="Ensembl"/>
</dbReference>
<dbReference type="GO" id="GO:0050976">
    <property type="term" value="P:detection of mechanical stimulus involved in sensory perception of touch"/>
    <property type="evidence" value="ECO:0000250"/>
    <property type="project" value="UniProtKB"/>
</dbReference>
<dbReference type="GO" id="GO:0007186">
    <property type="term" value="P:G protein-coupled receptor signaling pathway"/>
    <property type="evidence" value="ECO:0007669"/>
    <property type="project" value="Ensembl"/>
</dbReference>
<dbReference type="GO" id="GO:0014047">
    <property type="term" value="P:glutamate secretion"/>
    <property type="evidence" value="ECO:0000250"/>
    <property type="project" value="UniProtKB"/>
</dbReference>
<dbReference type="GO" id="GO:0007613">
    <property type="term" value="P:memory"/>
    <property type="evidence" value="ECO:0007669"/>
    <property type="project" value="Ensembl"/>
</dbReference>
<dbReference type="GO" id="GO:0060044">
    <property type="term" value="P:negative regulation of cardiac muscle cell proliferation"/>
    <property type="evidence" value="ECO:0007669"/>
    <property type="project" value="Ensembl"/>
</dbReference>
<dbReference type="GO" id="GO:2000279">
    <property type="term" value="P:negative regulation of DNA biosynthetic process"/>
    <property type="evidence" value="ECO:0007669"/>
    <property type="project" value="Ensembl"/>
</dbReference>
<dbReference type="GO" id="GO:0019228">
    <property type="term" value="P:neuronal action potential"/>
    <property type="evidence" value="ECO:0000250"/>
    <property type="project" value="UniProtKB"/>
</dbReference>
<dbReference type="GO" id="GO:1900039">
    <property type="term" value="P:positive regulation of cellular response to hypoxia"/>
    <property type="evidence" value="ECO:0007669"/>
    <property type="project" value="Ensembl"/>
</dbReference>
<dbReference type="GO" id="GO:0071805">
    <property type="term" value="P:potassium ion transmembrane transport"/>
    <property type="evidence" value="ECO:0000250"/>
    <property type="project" value="UniProtKB"/>
</dbReference>
<dbReference type="GO" id="GO:0032228">
    <property type="term" value="P:regulation of synaptic transmission, GABAergic"/>
    <property type="evidence" value="ECO:0000250"/>
    <property type="project" value="UniProtKB"/>
</dbReference>
<dbReference type="GO" id="GO:0048678">
    <property type="term" value="P:response to axon injury"/>
    <property type="evidence" value="ECO:0007669"/>
    <property type="project" value="Ensembl"/>
</dbReference>
<dbReference type="FunFam" id="1.10.287.70:FF:000043">
    <property type="entry name" value="Potassium channel subfamily K member 10 isoform 2"/>
    <property type="match status" value="1"/>
</dbReference>
<dbReference type="Gene3D" id="1.10.287.70">
    <property type="match status" value="1"/>
</dbReference>
<dbReference type="InterPro" id="IPR003280">
    <property type="entry name" value="2pore_dom_K_chnl"/>
</dbReference>
<dbReference type="InterPro" id="IPR003976">
    <property type="entry name" value="2pore_dom_K_chnl_TREK"/>
</dbReference>
<dbReference type="InterPro" id="IPR013099">
    <property type="entry name" value="K_chnl_dom"/>
</dbReference>
<dbReference type="PANTHER" id="PTHR11003:SF21">
    <property type="entry name" value="POTASSIUM CHANNEL SUBFAMILY K MEMBER 2"/>
    <property type="match status" value="1"/>
</dbReference>
<dbReference type="PANTHER" id="PTHR11003">
    <property type="entry name" value="POTASSIUM CHANNEL, SUBFAMILY K"/>
    <property type="match status" value="1"/>
</dbReference>
<dbReference type="Pfam" id="PF07885">
    <property type="entry name" value="Ion_trans_2"/>
    <property type="match status" value="2"/>
</dbReference>
<dbReference type="PRINTS" id="PR01333">
    <property type="entry name" value="2POREKCHANEL"/>
</dbReference>
<dbReference type="PRINTS" id="PR01499">
    <property type="entry name" value="TREKCHANNEL"/>
</dbReference>
<dbReference type="SUPFAM" id="SSF81324">
    <property type="entry name" value="Voltage-gated potassium channels"/>
    <property type="match status" value="2"/>
</dbReference>
<name>KCNK2_HUMAN</name>
<protein>
    <recommendedName>
        <fullName>Potassium channel subfamily K member 2</fullName>
    </recommendedName>
    <alternativeName>
        <fullName>Outward rectifying potassium channel protein TREK-1</fullName>
    </alternativeName>
    <alternativeName>
        <fullName>TREK-1 K(+) channel subunit</fullName>
    </alternativeName>
    <alternativeName>
        <fullName evidence="21">Two pore domain potassium channel TREK1</fullName>
    </alternativeName>
    <alternativeName>
        <fullName>Two pore potassium channel TPKC1</fullName>
        <shortName evidence="21">K2P2.1</shortName>
    </alternativeName>
</protein>